<gene>
    <name evidence="1" type="primary">cca</name>
    <name type="ordered locus">NGO_0763</name>
</gene>
<sequence>MQTYLVGGAVRDYLLGLPVKDRDWVVVGADAQTMLAQGFQPVGKDFPVFLHPKTHEEYALARTERKTAKGYAGFSFHADKDVTLEQDLMRRDLTINAMAQDADGKIIDPFGGQRDLAAGILRHVSPAFAEDPVRILRAARFAARYGFEIAEETIKLMRQMVENGEADALVAERVWQELAKGLMEKNPRKMIEMLRECGALQVLLPEVDALFGVPQRADYHPEIDSGIHTLMTLQRAADMGLSLPERYAALLHDLGKAKTPPDILPRHHGHDINGVEPVREVNQRLRAPRQCAELAELVCRWHIIFHQVGQLKSQTILNVLKKTDAFRRPERFQTALNVCIADTQGRLNREHTPYPQRAHWLALLEAANQADSGKIAAECRAQGKAHFIAEQIDRARLAQIAPLQKTFRGA</sequence>
<organism>
    <name type="scientific">Neisseria gonorrhoeae (strain ATCC 700825 / FA 1090)</name>
    <dbReference type="NCBI Taxonomy" id="242231"/>
    <lineage>
        <taxon>Bacteria</taxon>
        <taxon>Pseudomonadati</taxon>
        <taxon>Pseudomonadota</taxon>
        <taxon>Betaproteobacteria</taxon>
        <taxon>Neisseriales</taxon>
        <taxon>Neisseriaceae</taxon>
        <taxon>Neisseria</taxon>
    </lineage>
</organism>
<dbReference type="EC" id="2.7.7.72" evidence="1"/>
<dbReference type="EC" id="3.1.3.-" evidence="1"/>
<dbReference type="EC" id="3.1.4.-" evidence="1"/>
<dbReference type="EMBL" id="AE004969">
    <property type="protein sequence ID" value="AAW89478.1"/>
    <property type="molecule type" value="Genomic_DNA"/>
</dbReference>
<dbReference type="RefSeq" id="WP_003706239.1">
    <property type="nucleotide sequence ID" value="NC_002946.2"/>
</dbReference>
<dbReference type="RefSeq" id="YP_207890.1">
    <property type="nucleotide sequence ID" value="NC_002946.2"/>
</dbReference>
<dbReference type="SMR" id="Q5F8K9"/>
<dbReference type="STRING" id="242231.NGO_0763"/>
<dbReference type="KEGG" id="ngo:NGO_0763"/>
<dbReference type="PATRIC" id="fig|242231.10.peg.909"/>
<dbReference type="HOGENOM" id="CLU_015961_1_1_4"/>
<dbReference type="Proteomes" id="UP000000535">
    <property type="component" value="Chromosome"/>
</dbReference>
<dbReference type="GO" id="GO:0005524">
    <property type="term" value="F:ATP binding"/>
    <property type="evidence" value="ECO:0007669"/>
    <property type="project" value="UniProtKB-UniRule"/>
</dbReference>
<dbReference type="GO" id="GO:0004810">
    <property type="term" value="F:CCA tRNA nucleotidyltransferase activity"/>
    <property type="evidence" value="ECO:0007669"/>
    <property type="project" value="UniProtKB-UniRule"/>
</dbReference>
<dbReference type="GO" id="GO:0004112">
    <property type="term" value="F:cyclic-nucleotide phosphodiesterase activity"/>
    <property type="evidence" value="ECO:0007669"/>
    <property type="project" value="UniProtKB-UniRule"/>
</dbReference>
<dbReference type="GO" id="GO:0000287">
    <property type="term" value="F:magnesium ion binding"/>
    <property type="evidence" value="ECO:0007669"/>
    <property type="project" value="UniProtKB-UniRule"/>
</dbReference>
<dbReference type="GO" id="GO:0016791">
    <property type="term" value="F:phosphatase activity"/>
    <property type="evidence" value="ECO:0007669"/>
    <property type="project" value="UniProtKB-UniRule"/>
</dbReference>
<dbReference type="GO" id="GO:0000049">
    <property type="term" value="F:tRNA binding"/>
    <property type="evidence" value="ECO:0007669"/>
    <property type="project" value="UniProtKB-UniRule"/>
</dbReference>
<dbReference type="GO" id="GO:0042245">
    <property type="term" value="P:RNA repair"/>
    <property type="evidence" value="ECO:0007669"/>
    <property type="project" value="UniProtKB-KW"/>
</dbReference>
<dbReference type="GO" id="GO:0001680">
    <property type="term" value="P:tRNA 3'-terminal CCA addition"/>
    <property type="evidence" value="ECO:0007669"/>
    <property type="project" value="UniProtKB-UniRule"/>
</dbReference>
<dbReference type="CDD" id="cd00077">
    <property type="entry name" value="HDc"/>
    <property type="match status" value="1"/>
</dbReference>
<dbReference type="CDD" id="cd05398">
    <property type="entry name" value="NT_ClassII-CCAase"/>
    <property type="match status" value="1"/>
</dbReference>
<dbReference type="Gene3D" id="3.30.460.10">
    <property type="entry name" value="Beta Polymerase, domain 2"/>
    <property type="match status" value="1"/>
</dbReference>
<dbReference type="Gene3D" id="1.10.3090.10">
    <property type="entry name" value="cca-adding enzyme, domain 2"/>
    <property type="match status" value="1"/>
</dbReference>
<dbReference type="HAMAP" id="MF_01261">
    <property type="entry name" value="CCA_bact_type1"/>
    <property type="match status" value="1"/>
</dbReference>
<dbReference type="HAMAP" id="MF_01262">
    <property type="entry name" value="CCA_bact_type2"/>
    <property type="match status" value="1"/>
</dbReference>
<dbReference type="InterPro" id="IPR012006">
    <property type="entry name" value="CCA_bact"/>
</dbReference>
<dbReference type="InterPro" id="IPR003607">
    <property type="entry name" value="HD/PDEase_dom"/>
</dbReference>
<dbReference type="InterPro" id="IPR006674">
    <property type="entry name" value="HD_domain"/>
</dbReference>
<dbReference type="InterPro" id="IPR043519">
    <property type="entry name" value="NT_sf"/>
</dbReference>
<dbReference type="InterPro" id="IPR002646">
    <property type="entry name" value="PolA_pol_head_dom"/>
</dbReference>
<dbReference type="InterPro" id="IPR032828">
    <property type="entry name" value="PolyA_RNA-bd"/>
</dbReference>
<dbReference type="InterPro" id="IPR050124">
    <property type="entry name" value="tRNA_CCA-adding_enzyme"/>
</dbReference>
<dbReference type="NCBIfam" id="NF008137">
    <property type="entry name" value="PRK10885.1"/>
    <property type="match status" value="1"/>
</dbReference>
<dbReference type="PANTHER" id="PTHR47545">
    <property type="entry name" value="MULTIFUNCTIONAL CCA PROTEIN"/>
    <property type="match status" value="1"/>
</dbReference>
<dbReference type="PANTHER" id="PTHR47545:SF1">
    <property type="entry name" value="MULTIFUNCTIONAL CCA PROTEIN"/>
    <property type="match status" value="1"/>
</dbReference>
<dbReference type="Pfam" id="PF01966">
    <property type="entry name" value="HD"/>
    <property type="match status" value="1"/>
</dbReference>
<dbReference type="Pfam" id="PF01743">
    <property type="entry name" value="PolyA_pol"/>
    <property type="match status" value="1"/>
</dbReference>
<dbReference type="Pfam" id="PF12627">
    <property type="entry name" value="PolyA_pol_RNAbd"/>
    <property type="match status" value="1"/>
</dbReference>
<dbReference type="PIRSF" id="PIRSF000813">
    <property type="entry name" value="CCA_bact"/>
    <property type="match status" value="1"/>
</dbReference>
<dbReference type="SUPFAM" id="SSF81301">
    <property type="entry name" value="Nucleotidyltransferase"/>
    <property type="match status" value="1"/>
</dbReference>
<dbReference type="SUPFAM" id="SSF81891">
    <property type="entry name" value="Poly A polymerase C-terminal region-like"/>
    <property type="match status" value="1"/>
</dbReference>
<dbReference type="PROSITE" id="PS51831">
    <property type="entry name" value="HD"/>
    <property type="match status" value="1"/>
</dbReference>
<proteinExistence type="inferred from homology"/>
<keyword id="KW-0067">ATP-binding</keyword>
<keyword id="KW-0378">Hydrolase</keyword>
<keyword id="KW-0460">Magnesium</keyword>
<keyword id="KW-0479">Metal-binding</keyword>
<keyword id="KW-0511">Multifunctional enzyme</keyword>
<keyword id="KW-0533">Nickel</keyword>
<keyword id="KW-0547">Nucleotide-binding</keyword>
<keyword id="KW-0548">Nucleotidyltransferase</keyword>
<keyword id="KW-1185">Reference proteome</keyword>
<keyword id="KW-0692">RNA repair</keyword>
<keyword id="KW-0694">RNA-binding</keyword>
<keyword id="KW-0808">Transferase</keyword>
<keyword id="KW-0819">tRNA processing</keyword>
<reference key="1">
    <citation type="submission" date="2003-03" db="EMBL/GenBank/DDBJ databases">
        <title>The complete genome sequence of Neisseria gonorrhoeae.</title>
        <authorList>
            <person name="Lewis L.A."/>
            <person name="Gillaspy A.F."/>
            <person name="McLaughlin R.E."/>
            <person name="Gipson M."/>
            <person name="Ducey T.F."/>
            <person name="Ownbey T."/>
            <person name="Hartman K."/>
            <person name="Nydick C."/>
            <person name="Carson M.B."/>
            <person name="Vaughn J."/>
            <person name="Thomson C."/>
            <person name="Song L."/>
            <person name="Lin S."/>
            <person name="Yuan X."/>
            <person name="Najar F."/>
            <person name="Zhan M."/>
            <person name="Ren Q."/>
            <person name="Zhu H."/>
            <person name="Qi S."/>
            <person name="Kenton S.M."/>
            <person name="Lai H."/>
            <person name="White J.D."/>
            <person name="Clifton S."/>
            <person name="Roe B.A."/>
            <person name="Dyer D.W."/>
        </authorList>
    </citation>
    <scope>NUCLEOTIDE SEQUENCE [LARGE SCALE GENOMIC DNA]</scope>
    <source>
        <strain>ATCC 700825 / FA 1090</strain>
    </source>
</reference>
<evidence type="ECO:0000255" key="1">
    <source>
        <dbReference type="HAMAP-Rule" id="MF_01261"/>
    </source>
</evidence>
<comment type="function">
    <text evidence="1">Catalyzes the addition and repair of the essential 3'-terminal CCA sequence in tRNAs without using a nucleic acid template. Adds these three nucleotides in the order of C, C, and A to the tRNA nucleotide-73, using CTP and ATP as substrates and producing inorganic pyrophosphate. tRNA 3'-terminal CCA addition is required both for tRNA processing and repair. Also involved in tRNA surveillance by mediating tandem CCA addition to generate a CCACCA at the 3' terminus of unstable tRNAs. While stable tRNAs receive only 3'-terminal CCA, unstable tRNAs are marked with CCACCA and rapidly degraded.</text>
</comment>
<comment type="catalytic activity">
    <reaction evidence="1">
        <text>a tRNA precursor + 2 CTP + ATP = a tRNA with a 3' CCA end + 3 diphosphate</text>
        <dbReference type="Rhea" id="RHEA:14433"/>
        <dbReference type="Rhea" id="RHEA-COMP:10465"/>
        <dbReference type="Rhea" id="RHEA-COMP:10468"/>
        <dbReference type="ChEBI" id="CHEBI:30616"/>
        <dbReference type="ChEBI" id="CHEBI:33019"/>
        <dbReference type="ChEBI" id="CHEBI:37563"/>
        <dbReference type="ChEBI" id="CHEBI:74896"/>
        <dbReference type="ChEBI" id="CHEBI:83071"/>
        <dbReference type="EC" id="2.7.7.72"/>
    </reaction>
</comment>
<comment type="catalytic activity">
    <reaction evidence="1">
        <text>a tRNA with a 3' CCA end + 2 CTP + ATP = a tRNA with a 3' CCACCA end + 3 diphosphate</text>
        <dbReference type="Rhea" id="RHEA:76235"/>
        <dbReference type="Rhea" id="RHEA-COMP:10468"/>
        <dbReference type="Rhea" id="RHEA-COMP:18655"/>
        <dbReference type="ChEBI" id="CHEBI:30616"/>
        <dbReference type="ChEBI" id="CHEBI:33019"/>
        <dbReference type="ChEBI" id="CHEBI:37563"/>
        <dbReference type="ChEBI" id="CHEBI:83071"/>
        <dbReference type="ChEBI" id="CHEBI:195187"/>
    </reaction>
    <physiologicalReaction direction="left-to-right" evidence="1">
        <dbReference type="Rhea" id="RHEA:76236"/>
    </physiologicalReaction>
</comment>
<comment type="cofactor">
    <cofactor evidence="1">
        <name>Mg(2+)</name>
        <dbReference type="ChEBI" id="CHEBI:18420"/>
    </cofactor>
    <text evidence="1">Magnesium is required for nucleotidyltransferase activity.</text>
</comment>
<comment type="cofactor">
    <cofactor evidence="1">
        <name>Ni(2+)</name>
        <dbReference type="ChEBI" id="CHEBI:49786"/>
    </cofactor>
    <text evidence="1">Nickel for phosphatase activity.</text>
</comment>
<comment type="subunit">
    <text evidence="1">Monomer. Can also form homodimers and oligomers.</text>
</comment>
<comment type="domain">
    <text evidence="1">Comprises two domains: an N-terminal domain containing the nucleotidyltransferase activity and a C-terminal HD domain associated with both phosphodiesterase and phosphatase activities.</text>
</comment>
<comment type="miscellaneous">
    <text evidence="1">A single active site specifically recognizes both ATP and CTP and is responsible for their addition.</text>
</comment>
<comment type="similarity">
    <text evidence="1">Belongs to the tRNA nucleotidyltransferase/poly(A) polymerase family. Bacterial CCA-adding enzyme type 1 subfamily.</text>
</comment>
<protein>
    <recommendedName>
        <fullName evidence="1">Multifunctional CCA protein</fullName>
    </recommendedName>
    <domain>
        <recommendedName>
            <fullName evidence="1">CCA-adding enzyme</fullName>
            <ecNumber evidence="1">2.7.7.72</ecNumber>
        </recommendedName>
        <alternativeName>
            <fullName evidence="1">CCA tRNA nucleotidyltransferase</fullName>
        </alternativeName>
        <alternativeName>
            <fullName evidence="1">tRNA CCA-pyrophosphorylase</fullName>
        </alternativeName>
        <alternativeName>
            <fullName evidence="1">tRNA adenylyl-/cytidylyl-transferase</fullName>
        </alternativeName>
        <alternativeName>
            <fullName evidence="1">tRNA nucleotidyltransferase</fullName>
        </alternativeName>
        <alternativeName>
            <fullName evidence="1">tRNA-NT</fullName>
        </alternativeName>
    </domain>
    <domain>
        <recommendedName>
            <fullName evidence="1">2'-nucleotidase</fullName>
            <ecNumber evidence="1">3.1.3.-</ecNumber>
        </recommendedName>
    </domain>
    <domain>
        <recommendedName>
            <fullName evidence="1">2',3'-cyclic phosphodiesterase</fullName>
            <ecNumber evidence="1">3.1.4.-</ecNumber>
        </recommendedName>
    </domain>
    <domain>
        <recommendedName>
            <fullName evidence="1">Phosphatase</fullName>
            <ecNumber evidence="1">3.1.3.-</ecNumber>
        </recommendedName>
    </domain>
</protein>
<name>CCA_NEIG1</name>
<accession>Q5F8K9</accession>
<feature type="chain" id="PRO_0000138986" description="Multifunctional CCA protein">
    <location>
        <begin position="1"/>
        <end position="410"/>
    </location>
</feature>
<feature type="domain" description="HD" evidence="1">
    <location>
        <begin position="225"/>
        <end position="326"/>
    </location>
</feature>
<feature type="binding site" evidence="1">
    <location>
        <position position="8"/>
    </location>
    <ligand>
        <name>ATP</name>
        <dbReference type="ChEBI" id="CHEBI:30616"/>
    </ligand>
</feature>
<feature type="binding site" evidence="1">
    <location>
        <position position="8"/>
    </location>
    <ligand>
        <name>CTP</name>
        <dbReference type="ChEBI" id="CHEBI:37563"/>
    </ligand>
</feature>
<feature type="binding site" evidence="1">
    <location>
        <position position="11"/>
    </location>
    <ligand>
        <name>ATP</name>
        <dbReference type="ChEBI" id="CHEBI:30616"/>
    </ligand>
</feature>
<feature type="binding site" evidence="1">
    <location>
        <position position="11"/>
    </location>
    <ligand>
        <name>CTP</name>
        <dbReference type="ChEBI" id="CHEBI:37563"/>
    </ligand>
</feature>
<feature type="binding site" evidence="1">
    <location>
        <position position="21"/>
    </location>
    <ligand>
        <name>Mg(2+)</name>
        <dbReference type="ChEBI" id="CHEBI:18420"/>
    </ligand>
</feature>
<feature type="binding site" evidence="1">
    <location>
        <position position="23"/>
    </location>
    <ligand>
        <name>Mg(2+)</name>
        <dbReference type="ChEBI" id="CHEBI:18420"/>
    </ligand>
</feature>
<feature type="binding site" evidence="1">
    <location>
        <position position="91"/>
    </location>
    <ligand>
        <name>ATP</name>
        <dbReference type="ChEBI" id="CHEBI:30616"/>
    </ligand>
</feature>
<feature type="binding site" evidence="1">
    <location>
        <position position="91"/>
    </location>
    <ligand>
        <name>CTP</name>
        <dbReference type="ChEBI" id="CHEBI:37563"/>
    </ligand>
</feature>
<feature type="binding site" evidence="1">
    <location>
        <position position="137"/>
    </location>
    <ligand>
        <name>ATP</name>
        <dbReference type="ChEBI" id="CHEBI:30616"/>
    </ligand>
</feature>
<feature type="binding site" evidence="1">
    <location>
        <position position="137"/>
    </location>
    <ligand>
        <name>CTP</name>
        <dbReference type="ChEBI" id="CHEBI:37563"/>
    </ligand>
</feature>
<feature type="binding site" evidence="1">
    <location>
        <position position="140"/>
    </location>
    <ligand>
        <name>ATP</name>
        <dbReference type="ChEBI" id="CHEBI:30616"/>
    </ligand>
</feature>
<feature type="binding site" evidence="1">
    <location>
        <position position="140"/>
    </location>
    <ligand>
        <name>CTP</name>
        <dbReference type="ChEBI" id="CHEBI:37563"/>
    </ligand>
</feature>